<keyword id="KW-0025">Alternative splicing</keyword>
<keyword id="KW-1003">Cell membrane</keyword>
<keyword id="KW-0963">Cytoplasm</keyword>
<keyword id="KW-0472">Membrane</keyword>
<keyword id="KW-0597">Phosphoprotein</keyword>
<keyword id="KW-1185">Reference proteome</keyword>
<accession>Q5DU31</accession>
<accession>Q3TZY2</accession>
<accession>Q8CAP9</accession>
<sequence length="406" mass="45812">MSRRRISCKDLGHADCQGWLYKKKEKGTFLSNKWKKFWVVLKGSSLYWYSNQMAEKADGFVNLSDFTVERASECKKKNAFKINHPQIKAFYFAAENLQEMNVWLNKLGFAVTHQESITKDEECYSESEQEDPEVAVEAPPPPYASTTSSPVAAQWASSSSPKRRETSCSFSSLENTVKAPSQFSSSGSKERQSWHNIVNSSPATEDAGLPLTFAEQVHTLAFSEASNCQAPENNCITSEGGLLNLLSSDDTSSLNNNKDHLTVPDRAAGSRMADREEIKSSEDDEMEKLYKSLEQASLSPLGDRRPSTKKELRKSFVKRCKNPSINEKLHKIRTLNSTLKCKEHDLAMINQLLDDPKLTARKYREWKVMNTLLIQDIYQQQAPQDPEVTPQEVMNPTSSDCVENSL</sequence>
<dbReference type="EMBL" id="AK157384">
    <property type="protein sequence ID" value="BAE34075.1"/>
    <property type="status" value="ALT_INIT"/>
    <property type="molecule type" value="mRNA"/>
</dbReference>
<dbReference type="EMBL" id="AK038257">
    <property type="protein sequence ID" value="BAC29953.1"/>
    <property type="status" value="ALT_INIT"/>
    <property type="molecule type" value="mRNA"/>
</dbReference>
<dbReference type="EMBL" id="AK220339">
    <property type="protein sequence ID" value="BAD90405.1"/>
    <property type="status" value="ALT_INIT"/>
    <property type="molecule type" value="mRNA"/>
</dbReference>
<dbReference type="EMBL" id="AC155718">
    <property type="status" value="NOT_ANNOTATED_CDS"/>
    <property type="molecule type" value="Genomic_DNA"/>
</dbReference>
<dbReference type="EMBL" id="AC164171">
    <property type="status" value="NOT_ANNOTATED_CDS"/>
    <property type="molecule type" value="Genomic_DNA"/>
</dbReference>
<dbReference type="CCDS" id="CCDS56688.1">
    <molecule id="Q5DU31-1"/>
</dbReference>
<dbReference type="CCDS" id="CCDS83676.1">
    <molecule id="Q5DU31-2"/>
</dbReference>
<dbReference type="RefSeq" id="NP_001164271.1">
    <molecule id="Q5DU31-1"/>
    <property type="nucleotide sequence ID" value="NM_001170800.1"/>
</dbReference>
<dbReference type="RefSeq" id="NP_001334154.1">
    <molecule id="Q5DU31-2"/>
    <property type="nucleotide sequence ID" value="NM_001347225.1"/>
</dbReference>
<dbReference type="RefSeq" id="XP_030100986.1">
    <molecule id="Q5DU31-2"/>
    <property type="nucleotide sequence ID" value="XM_030245126.2"/>
</dbReference>
<dbReference type="SMR" id="Q5DU31"/>
<dbReference type="BioGRID" id="236068">
    <property type="interactions" value="2"/>
</dbReference>
<dbReference type="FunCoup" id="Q5DU31">
    <property type="interactions" value="566"/>
</dbReference>
<dbReference type="STRING" id="10090.ENSMUSP00000077215"/>
<dbReference type="GlyGen" id="Q5DU31">
    <property type="glycosylation" value="3 sites, 1 O-linked glycan (3 sites)"/>
</dbReference>
<dbReference type="iPTMnet" id="Q5DU31"/>
<dbReference type="PhosphoSitePlus" id="Q5DU31"/>
<dbReference type="PaxDb" id="10090-ENSMUSP00000101242"/>
<dbReference type="ProteomicsDB" id="273259">
    <molecule id="Q5DU31-1"/>
</dbReference>
<dbReference type="ProteomicsDB" id="273260">
    <molecule id="Q5DU31-2"/>
</dbReference>
<dbReference type="ProteomicsDB" id="273261">
    <molecule id="Q5DU31-3"/>
</dbReference>
<dbReference type="Antibodypedia" id="33399">
    <property type="antibodies" value="132 antibodies from 17 providers"/>
</dbReference>
<dbReference type="DNASU" id="320495"/>
<dbReference type="Ensembl" id="ENSMUST00000078070.10">
    <molecule id="Q5DU31-2"/>
    <property type="protein sequence ID" value="ENSMUSP00000077215.4"/>
    <property type="gene ID" value="ENSMUSG00000064065.16"/>
</dbReference>
<dbReference type="Ensembl" id="ENSMUST00000105617.8">
    <molecule id="Q5DU31-1"/>
    <property type="protein sequence ID" value="ENSMUSP00000101242.2"/>
    <property type="gene ID" value="ENSMUSG00000064065.16"/>
</dbReference>
<dbReference type="GeneID" id="320495"/>
<dbReference type="KEGG" id="mmu:320495"/>
<dbReference type="UCSC" id="uc007efr.1">
    <molecule id="Q5DU31-3"/>
    <property type="organism name" value="mouse"/>
</dbReference>
<dbReference type="UCSC" id="uc007efs.1">
    <molecule id="Q5DU31-2"/>
    <property type="organism name" value="mouse"/>
</dbReference>
<dbReference type="UCSC" id="uc011wzm.1">
    <molecule id="Q5DU31-1"/>
    <property type="organism name" value="mouse"/>
</dbReference>
<dbReference type="AGR" id="MGI:2444159"/>
<dbReference type="CTD" id="26034"/>
<dbReference type="MGI" id="MGI:2444159">
    <property type="gene designation" value="Ipcef1"/>
</dbReference>
<dbReference type="VEuPathDB" id="HostDB:ENSMUSG00000064065"/>
<dbReference type="eggNOG" id="KOG1738">
    <property type="taxonomic scope" value="Eukaryota"/>
</dbReference>
<dbReference type="GeneTree" id="ENSGT00940000154428"/>
<dbReference type="HOGENOM" id="CLU_051850_0_0_1"/>
<dbReference type="InParanoid" id="Q5DU31"/>
<dbReference type="OMA" id="ENSFAMS"/>
<dbReference type="OrthoDB" id="74412at2759"/>
<dbReference type="TreeFam" id="TF326495"/>
<dbReference type="BioGRID-ORCS" id="320495">
    <property type="hits" value="3 hits in 78 CRISPR screens"/>
</dbReference>
<dbReference type="ChiTaRS" id="Ipcef1">
    <property type="organism name" value="mouse"/>
</dbReference>
<dbReference type="PRO" id="PR:Q5DU31"/>
<dbReference type="Proteomes" id="UP000000589">
    <property type="component" value="Chromosome 10"/>
</dbReference>
<dbReference type="RNAct" id="Q5DU31">
    <property type="molecule type" value="protein"/>
</dbReference>
<dbReference type="Bgee" id="ENSMUSG00000064065">
    <property type="expression patterns" value="Expressed in animal zygote and 101 other cell types or tissues"/>
</dbReference>
<dbReference type="ExpressionAtlas" id="Q5DU31">
    <property type="expression patterns" value="baseline and differential"/>
</dbReference>
<dbReference type="GO" id="GO:0005737">
    <property type="term" value="C:cytoplasm"/>
    <property type="evidence" value="ECO:0007669"/>
    <property type="project" value="UniProtKB-SubCell"/>
</dbReference>
<dbReference type="GO" id="GO:0005886">
    <property type="term" value="C:plasma membrane"/>
    <property type="evidence" value="ECO:0007669"/>
    <property type="project" value="UniProtKB-SubCell"/>
</dbReference>
<dbReference type="CDD" id="cd01260">
    <property type="entry name" value="PH_CNK_mammalian-like"/>
    <property type="match status" value="1"/>
</dbReference>
<dbReference type="FunFam" id="2.30.29.30:FF:000092">
    <property type="entry name" value="Connector enhancer of kinase suppressor of Ras 2"/>
    <property type="match status" value="1"/>
</dbReference>
<dbReference type="Gene3D" id="2.30.29.30">
    <property type="entry name" value="Pleckstrin-homology domain (PH domain)/Phosphotyrosine-binding domain (PTB)"/>
    <property type="match status" value="1"/>
</dbReference>
<dbReference type="InterPro" id="IPR051566">
    <property type="entry name" value="CNKSR"/>
</dbReference>
<dbReference type="InterPro" id="IPR011993">
    <property type="entry name" value="PH-like_dom_sf"/>
</dbReference>
<dbReference type="InterPro" id="IPR001849">
    <property type="entry name" value="PH_domain"/>
</dbReference>
<dbReference type="PANTHER" id="PTHR12844:SF45">
    <property type="entry name" value="CNK3_IPCEF1 FUSION PROTEIN-RELATED"/>
    <property type="match status" value="1"/>
</dbReference>
<dbReference type="PANTHER" id="PTHR12844">
    <property type="entry name" value="CONNECTOR ENCHANCER OF KINASE SUPPRESSOR OF RAS"/>
    <property type="match status" value="1"/>
</dbReference>
<dbReference type="Pfam" id="PF00169">
    <property type="entry name" value="PH"/>
    <property type="match status" value="1"/>
</dbReference>
<dbReference type="SMART" id="SM00233">
    <property type="entry name" value="PH"/>
    <property type="match status" value="1"/>
</dbReference>
<dbReference type="SUPFAM" id="SSF50729">
    <property type="entry name" value="PH domain-like"/>
    <property type="match status" value="1"/>
</dbReference>
<dbReference type="PROSITE" id="PS50003">
    <property type="entry name" value="PH_DOMAIN"/>
    <property type="match status" value="1"/>
</dbReference>
<comment type="function">
    <text evidence="1">Enhances the promotion of guanine-nucleotide exchange by PSCD2 on ARF6 in a concentration-dependent manner.</text>
</comment>
<comment type="subunit">
    <text evidence="1">Interacts with guanine-nucleotide exchange factors PSCD1, PSCD2, PSCD3 and PSCD4.</text>
</comment>
<comment type="subcellular location">
    <subcellularLocation>
        <location evidence="1">Cytoplasm</location>
    </subcellularLocation>
    <subcellularLocation>
        <location evidence="1">Cell membrane</location>
    </subcellularLocation>
    <text evidence="1">Translocated with PSCD2 to the plasma membrane upon epidermal growth factor (EGF) stimulation.</text>
</comment>
<comment type="alternative products">
    <event type="alternative splicing"/>
    <isoform>
        <id>Q5DU31-1</id>
        <name>1</name>
        <sequence type="displayed"/>
    </isoform>
    <isoform>
        <id>Q5DU31-2</id>
        <name>2</name>
        <sequence type="described" ref="VSP_032683"/>
    </isoform>
    <isoform>
        <id>Q5DU31-3</id>
        <name>3</name>
        <sequence type="described" ref="VSP_032684 VSP_032685"/>
    </isoform>
</comment>
<comment type="sequence caution" evidence="6">
    <conflict type="erroneous initiation">
        <sequence resource="EMBL-CDS" id="BAC29953"/>
    </conflict>
</comment>
<comment type="sequence caution" evidence="6">
    <conflict type="erroneous initiation">
        <sequence resource="EMBL-CDS" id="BAD90405"/>
    </conflict>
</comment>
<comment type="sequence caution" evidence="6">
    <conflict type="erroneous initiation">
        <sequence resource="EMBL-CDS" id="BAE34075"/>
    </conflict>
</comment>
<reference key="1">
    <citation type="submission" date="2005-02" db="EMBL/GenBank/DDBJ databases">
        <title>Prediction of the coding sequences of mouse homologues of KIAA gene. The complete nucleotide sequences of mouse KIAA-homologous cDNAs identified by screening of terminal sequences of cDNA clones randomly sampled from size-fractionated libraries.</title>
        <authorList>
            <person name="Okazaki N."/>
            <person name="Kikuno R.F."/>
            <person name="Ohara R."/>
            <person name="Inamoto S."/>
            <person name="Nagase T."/>
            <person name="Ohara O."/>
            <person name="Koga H."/>
        </authorList>
    </citation>
    <scope>NUCLEOTIDE SEQUENCE [LARGE SCALE MRNA] (ISOFORM 2)</scope>
    <source>
        <tissue>Brain</tissue>
    </source>
</reference>
<reference key="2">
    <citation type="journal article" date="2005" name="Science">
        <title>The transcriptional landscape of the mammalian genome.</title>
        <authorList>
            <person name="Carninci P."/>
            <person name="Kasukawa T."/>
            <person name="Katayama S."/>
            <person name="Gough J."/>
            <person name="Frith M.C."/>
            <person name="Maeda N."/>
            <person name="Oyama R."/>
            <person name="Ravasi T."/>
            <person name="Lenhard B."/>
            <person name="Wells C."/>
            <person name="Kodzius R."/>
            <person name="Shimokawa K."/>
            <person name="Bajic V.B."/>
            <person name="Brenner S.E."/>
            <person name="Batalov S."/>
            <person name="Forrest A.R."/>
            <person name="Zavolan M."/>
            <person name="Davis M.J."/>
            <person name="Wilming L.G."/>
            <person name="Aidinis V."/>
            <person name="Allen J.E."/>
            <person name="Ambesi-Impiombato A."/>
            <person name="Apweiler R."/>
            <person name="Aturaliya R.N."/>
            <person name="Bailey T.L."/>
            <person name="Bansal M."/>
            <person name="Baxter L."/>
            <person name="Beisel K.W."/>
            <person name="Bersano T."/>
            <person name="Bono H."/>
            <person name="Chalk A.M."/>
            <person name="Chiu K.P."/>
            <person name="Choudhary V."/>
            <person name="Christoffels A."/>
            <person name="Clutterbuck D.R."/>
            <person name="Crowe M.L."/>
            <person name="Dalla E."/>
            <person name="Dalrymple B.P."/>
            <person name="de Bono B."/>
            <person name="Della Gatta G."/>
            <person name="di Bernardo D."/>
            <person name="Down T."/>
            <person name="Engstrom P."/>
            <person name="Fagiolini M."/>
            <person name="Faulkner G."/>
            <person name="Fletcher C.F."/>
            <person name="Fukushima T."/>
            <person name="Furuno M."/>
            <person name="Futaki S."/>
            <person name="Gariboldi M."/>
            <person name="Georgii-Hemming P."/>
            <person name="Gingeras T.R."/>
            <person name="Gojobori T."/>
            <person name="Green R.E."/>
            <person name="Gustincich S."/>
            <person name="Harbers M."/>
            <person name="Hayashi Y."/>
            <person name="Hensch T.K."/>
            <person name="Hirokawa N."/>
            <person name="Hill D."/>
            <person name="Huminiecki L."/>
            <person name="Iacono M."/>
            <person name="Ikeo K."/>
            <person name="Iwama A."/>
            <person name="Ishikawa T."/>
            <person name="Jakt M."/>
            <person name="Kanapin A."/>
            <person name="Katoh M."/>
            <person name="Kawasawa Y."/>
            <person name="Kelso J."/>
            <person name="Kitamura H."/>
            <person name="Kitano H."/>
            <person name="Kollias G."/>
            <person name="Krishnan S.P."/>
            <person name="Kruger A."/>
            <person name="Kummerfeld S.K."/>
            <person name="Kurochkin I.V."/>
            <person name="Lareau L.F."/>
            <person name="Lazarevic D."/>
            <person name="Lipovich L."/>
            <person name="Liu J."/>
            <person name="Liuni S."/>
            <person name="McWilliam S."/>
            <person name="Madan Babu M."/>
            <person name="Madera M."/>
            <person name="Marchionni L."/>
            <person name="Matsuda H."/>
            <person name="Matsuzawa S."/>
            <person name="Miki H."/>
            <person name="Mignone F."/>
            <person name="Miyake S."/>
            <person name="Morris K."/>
            <person name="Mottagui-Tabar S."/>
            <person name="Mulder N."/>
            <person name="Nakano N."/>
            <person name="Nakauchi H."/>
            <person name="Ng P."/>
            <person name="Nilsson R."/>
            <person name="Nishiguchi S."/>
            <person name="Nishikawa S."/>
            <person name="Nori F."/>
            <person name="Ohara O."/>
            <person name="Okazaki Y."/>
            <person name="Orlando V."/>
            <person name="Pang K.C."/>
            <person name="Pavan W.J."/>
            <person name="Pavesi G."/>
            <person name="Pesole G."/>
            <person name="Petrovsky N."/>
            <person name="Piazza S."/>
            <person name="Reed J."/>
            <person name="Reid J.F."/>
            <person name="Ring B.Z."/>
            <person name="Ringwald M."/>
            <person name="Rost B."/>
            <person name="Ruan Y."/>
            <person name="Salzberg S.L."/>
            <person name="Sandelin A."/>
            <person name="Schneider C."/>
            <person name="Schoenbach C."/>
            <person name="Sekiguchi K."/>
            <person name="Semple C.A."/>
            <person name="Seno S."/>
            <person name="Sessa L."/>
            <person name="Sheng Y."/>
            <person name="Shibata Y."/>
            <person name="Shimada H."/>
            <person name="Shimada K."/>
            <person name="Silva D."/>
            <person name="Sinclair B."/>
            <person name="Sperling S."/>
            <person name="Stupka E."/>
            <person name="Sugiura K."/>
            <person name="Sultana R."/>
            <person name="Takenaka Y."/>
            <person name="Taki K."/>
            <person name="Tammoja K."/>
            <person name="Tan S.L."/>
            <person name="Tang S."/>
            <person name="Taylor M.S."/>
            <person name="Tegner J."/>
            <person name="Teichmann S.A."/>
            <person name="Ueda H.R."/>
            <person name="van Nimwegen E."/>
            <person name="Verardo R."/>
            <person name="Wei C.L."/>
            <person name="Yagi K."/>
            <person name="Yamanishi H."/>
            <person name="Zabarovsky E."/>
            <person name="Zhu S."/>
            <person name="Zimmer A."/>
            <person name="Hide W."/>
            <person name="Bult C."/>
            <person name="Grimmond S.M."/>
            <person name="Teasdale R.D."/>
            <person name="Liu E.T."/>
            <person name="Brusic V."/>
            <person name="Quackenbush J."/>
            <person name="Wahlestedt C."/>
            <person name="Mattick J.S."/>
            <person name="Hume D.A."/>
            <person name="Kai C."/>
            <person name="Sasaki D."/>
            <person name="Tomaru Y."/>
            <person name="Fukuda S."/>
            <person name="Kanamori-Katayama M."/>
            <person name="Suzuki M."/>
            <person name="Aoki J."/>
            <person name="Arakawa T."/>
            <person name="Iida J."/>
            <person name="Imamura K."/>
            <person name="Itoh M."/>
            <person name="Kato T."/>
            <person name="Kawaji H."/>
            <person name="Kawagashira N."/>
            <person name="Kawashima T."/>
            <person name="Kojima M."/>
            <person name="Kondo S."/>
            <person name="Konno H."/>
            <person name="Nakano K."/>
            <person name="Ninomiya N."/>
            <person name="Nishio T."/>
            <person name="Okada M."/>
            <person name="Plessy C."/>
            <person name="Shibata K."/>
            <person name="Shiraki T."/>
            <person name="Suzuki S."/>
            <person name="Tagami M."/>
            <person name="Waki K."/>
            <person name="Watahiki A."/>
            <person name="Okamura-Oho Y."/>
            <person name="Suzuki H."/>
            <person name="Kawai J."/>
            <person name="Hayashizaki Y."/>
        </authorList>
    </citation>
    <scope>NUCLEOTIDE SEQUENCE [LARGE SCALE MRNA] (ISOFORM 3)</scope>
    <scope>NUCLEOTIDE SEQUENCE [LARGE SCALE MRNA] OF 227-406 (ISOFORM 1)</scope>
    <source>
        <strain>C57BL/6J</strain>
        <strain>NOD</strain>
        <tissue>Spleen</tissue>
        <tissue>Thymus</tissue>
    </source>
</reference>
<reference key="3">
    <citation type="journal article" date="2009" name="PLoS Biol.">
        <title>Lineage-specific biology revealed by a finished genome assembly of the mouse.</title>
        <authorList>
            <person name="Church D.M."/>
            <person name="Goodstadt L."/>
            <person name="Hillier L.W."/>
            <person name="Zody M.C."/>
            <person name="Goldstein S."/>
            <person name="She X."/>
            <person name="Bult C.J."/>
            <person name="Agarwala R."/>
            <person name="Cherry J.L."/>
            <person name="DiCuccio M."/>
            <person name="Hlavina W."/>
            <person name="Kapustin Y."/>
            <person name="Meric P."/>
            <person name="Maglott D."/>
            <person name="Birtle Z."/>
            <person name="Marques A.C."/>
            <person name="Graves T."/>
            <person name="Zhou S."/>
            <person name="Teague B."/>
            <person name="Potamousis K."/>
            <person name="Churas C."/>
            <person name="Place M."/>
            <person name="Herschleb J."/>
            <person name="Runnheim R."/>
            <person name="Forrest D."/>
            <person name="Amos-Landgraf J."/>
            <person name="Schwartz D.C."/>
            <person name="Cheng Z."/>
            <person name="Lindblad-Toh K."/>
            <person name="Eichler E.E."/>
            <person name="Ponting C.P."/>
        </authorList>
    </citation>
    <scope>NUCLEOTIDE SEQUENCE [LARGE SCALE GENOMIC DNA]</scope>
    <source>
        <strain>C57BL/6J</strain>
    </source>
</reference>
<reference key="4">
    <citation type="journal article" date="2010" name="Cell">
        <title>A tissue-specific atlas of mouse protein phosphorylation and expression.</title>
        <authorList>
            <person name="Huttlin E.L."/>
            <person name="Jedrychowski M.P."/>
            <person name="Elias J.E."/>
            <person name="Goswami T."/>
            <person name="Rad R."/>
            <person name="Beausoleil S.A."/>
            <person name="Villen J."/>
            <person name="Haas W."/>
            <person name="Sowa M.E."/>
            <person name="Gygi S.P."/>
        </authorList>
    </citation>
    <scope>PHOSPHORYLATION [LARGE SCALE ANALYSIS] AT SER-164 (ISOFORM 2)</scope>
    <scope>IDENTIFICATION BY MASS SPECTROMETRY [LARGE SCALE ANALYSIS]</scope>
    <source>
        <tissue>Brain</tissue>
        <tissue>Kidney</tissue>
    </source>
</reference>
<proteinExistence type="evidence at protein level"/>
<protein>
    <recommendedName>
        <fullName>Interactor protein for cytohesin exchange factors 1</fullName>
    </recommendedName>
</protein>
<feature type="chain" id="PRO_0000326631" description="Interactor protein for cytohesin exchange factors 1">
    <location>
        <begin position="1"/>
        <end position="406"/>
    </location>
</feature>
<feature type="domain" description="PH" evidence="2">
    <location>
        <begin position="13"/>
        <end position="112"/>
    </location>
</feature>
<feature type="region of interest" description="Disordered" evidence="3">
    <location>
        <begin position="120"/>
        <end position="173"/>
    </location>
</feature>
<feature type="region of interest" description="Disordered" evidence="3">
    <location>
        <begin position="253"/>
        <end position="285"/>
    </location>
</feature>
<feature type="region of interest" description="Disordered" evidence="3">
    <location>
        <begin position="383"/>
        <end position="406"/>
    </location>
</feature>
<feature type="compositionally biased region" description="Acidic residues" evidence="3">
    <location>
        <begin position="123"/>
        <end position="134"/>
    </location>
</feature>
<feature type="compositionally biased region" description="Low complexity" evidence="3">
    <location>
        <begin position="144"/>
        <end position="153"/>
    </location>
</feature>
<feature type="compositionally biased region" description="Basic and acidic residues" evidence="3">
    <location>
        <begin position="272"/>
        <end position="285"/>
    </location>
</feature>
<feature type="compositionally biased region" description="Polar residues" evidence="3">
    <location>
        <begin position="392"/>
        <end position="406"/>
    </location>
</feature>
<feature type="splice variant" id="VSP_032683" description="In isoform 2." evidence="5">
    <original>V</original>
    <variation>VVRVD</variation>
    <location>
        <position position="151"/>
    </location>
</feature>
<feature type="splice variant" id="VSP_032684" description="In isoform 3." evidence="4">
    <original>EEIKSSEDDEMEKLYKSLEQASL</original>
    <variation>GKPGICLLFLDGEYLLGHCMILI</variation>
    <location>
        <begin position="276"/>
        <end position="298"/>
    </location>
</feature>
<feature type="splice variant" id="VSP_032685" description="In isoform 3." evidence="4">
    <location>
        <begin position="299"/>
        <end position="406"/>
    </location>
</feature>
<feature type="modified residue" description="Phosphoserine" evidence="7">
    <location sequence="Q5DU31-2">
        <position position="164"/>
    </location>
</feature>
<organism>
    <name type="scientific">Mus musculus</name>
    <name type="common">Mouse</name>
    <dbReference type="NCBI Taxonomy" id="10090"/>
    <lineage>
        <taxon>Eukaryota</taxon>
        <taxon>Metazoa</taxon>
        <taxon>Chordata</taxon>
        <taxon>Craniata</taxon>
        <taxon>Vertebrata</taxon>
        <taxon>Euteleostomi</taxon>
        <taxon>Mammalia</taxon>
        <taxon>Eutheria</taxon>
        <taxon>Euarchontoglires</taxon>
        <taxon>Glires</taxon>
        <taxon>Rodentia</taxon>
        <taxon>Myomorpha</taxon>
        <taxon>Muroidea</taxon>
        <taxon>Muridae</taxon>
        <taxon>Murinae</taxon>
        <taxon>Mus</taxon>
        <taxon>Mus</taxon>
    </lineage>
</organism>
<gene>
    <name type="primary">Ipcef1</name>
    <name type="synonym">Kiaa0403</name>
</gene>
<evidence type="ECO:0000250" key="1"/>
<evidence type="ECO:0000255" key="2">
    <source>
        <dbReference type="PROSITE-ProRule" id="PRU00145"/>
    </source>
</evidence>
<evidence type="ECO:0000256" key="3">
    <source>
        <dbReference type="SAM" id="MobiDB-lite"/>
    </source>
</evidence>
<evidence type="ECO:0000303" key="4">
    <source>
    </source>
</evidence>
<evidence type="ECO:0000303" key="5">
    <source ref="1"/>
</evidence>
<evidence type="ECO:0000305" key="6"/>
<evidence type="ECO:0007744" key="7">
    <source>
    </source>
</evidence>
<name>ICEF1_MOUSE</name>